<evidence type="ECO:0000255" key="1"/>
<evidence type="ECO:0000255" key="2">
    <source>
        <dbReference type="PROSITE-ProRule" id="PRU00107"/>
    </source>
</evidence>
<evidence type="ECO:0000269" key="3">
    <source>
    </source>
</evidence>
<evidence type="ECO:0000269" key="4">
    <source>
    </source>
</evidence>
<evidence type="ECO:0000269" key="5">
    <source>
    </source>
</evidence>
<evidence type="ECO:0000269" key="6">
    <source>
    </source>
</evidence>
<evidence type="ECO:0000269" key="7">
    <source>
    </source>
</evidence>
<evidence type="ECO:0000303" key="8">
    <source>
    </source>
</evidence>
<evidence type="ECO:0000305" key="9"/>
<evidence type="ECO:0000305" key="10">
    <source>
    </source>
</evidence>
<protein>
    <recommendedName>
        <fullName evidence="8">Sensor histidine kinase GlnK</fullName>
        <ecNumber evidence="10">2.7.13.3</ecNumber>
    </recommendedName>
</protein>
<comment type="function">
    <text evidence="3 4 5 6">Member of the two-component regulatory system GlnK/GlnL that positively regulates the expression of the glsA-glnT operon in response to glutamine (PubMed:11717295, PubMed:15995196). It seems that autophosphorylated GlnK transfers a phosphoryl group to GlnL, which positively regulates the expression of the glsA-glnT operon (PubMed:11717295, PubMed:15995196). Interaction between GlnK-AmtB complex and TnrA protects TnrA from proteolytic degradation (PubMed:17001076, PubMed:21435182).</text>
</comment>
<comment type="catalytic activity">
    <reaction evidence="10">
        <text>ATP + protein L-histidine = ADP + protein N-phospho-L-histidine.</text>
        <dbReference type="EC" id="2.7.13.3"/>
    </reaction>
</comment>
<comment type="subunit">
    <text evidence="5 6 7">Homotrimer (PubMed:17001076, PubMed:25691471). Under poor nitrogen source such as nitrate, the complex between GlnK and AmtB, which are the transmembrane ammonium transporter and its cognate regulator, respectively, interacts with TnrA (PubMed:17001076, PubMed:21435182, PubMed:25691471). GlnK-ATP complex are not able to bind TnrA (PubMed:21435182).</text>
</comment>
<comment type="interaction">
    <interactant intactId="EBI-8507093">
        <id>P40758</id>
    </interactant>
    <interactant intactId="EBI-8507041">
        <id>Q45666</id>
        <label>tnrA</label>
    </interactant>
    <organismsDiffer>false</organismsDiffer>
    <experiments>6</experiments>
</comment>
<comment type="subcellular location">
    <subcellularLocation>
        <location evidence="5">Cell membrane</location>
        <topology evidence="10">Multi-pass membrane protein</topology>
    </subcellularLocation>
    <text evidence="5">ATP concentrations are sensed by GlnK and affect its cellular localization.</text>
</comment>
<comment type="disruption phenotype">
    <text evidence="5 6">In the absence of nitrogen source, cells lacking this gene do not show degradation of TnrA, which is entirely soluble.</text>
</comment>
<comment type="sequence caution" evidence="9">
    <conflict type="frameshift">
        <sequence resource="EMBL-CDS" id="BAA33142"/>
    </conflict>
</comment>
<feature type="chain" id="PRO_0000074768" description="Sensor histidine kinase GlnK">
    <location>
        <begin position="1"/>
        <end position="410"/>
    </location>
</feature>
<feature type="topological domain" description="Extracellular" evidence="1">
    <location>
        <begin position="1"/>
        <end position="15"/>
    </location>
</feature>
<feature type="transmembrane region" description="Helical" evidence="1">
    <location>
        <begin position="16"/>
        <end position="36"/>
    </location>
</feature>
<feature type="topological domain" description="Cytoplasmic" evidence="1">
    <location>
        <begin position="37"/>
        <end position="38"/>
    </location>
</feature>
<feature type="transmembrane region" description="Helical" evidence="1">
    <location>
        <begin position="39"/>
        <end position="59"/>
    </location>
</feature>
<feature type="topological domain" description="Extracellular" evidence="1">
    <location>
        <begin position="60"/>
        <end position="71"/>
    </location>
</feature>
<feature type="transmembrane region" description="Helical" evidence="1">
    <location>
        <begin position="72"/>
        <end position="92"/>
    </location>
</feature>
<feature type="topological domain" description="Cytoplasmic" evidence="1">
    <location>
        <begin position="93"/>
        <end position="102"/>
    </location>
</feature>
<feature type="transmembrane region" description="Helical" evidence="1">
    <location>
        <begin position="103"/>
        <end position="123"/>
    </location>
</feature>
<feature type="topological domain" description="Extracellular" evidence="1">
    <location>
        <begin position="124"/>
        <end position="139"/>
    </location>
</feature>
<feature type="transmembrane region" description="Helical" evidence="1">
    <location>
        <begin position="140"/>
        <end position="160"/>
    </location>
</feature>
<feature type="topological domain" description="Cytoplasmic" evidence="1">
    <location>
        <begin position="161"/>
        <end position="410"/>
    </location>
</feature>
<feature type="domain" description="Histidine kinase" evidence="2">
    <location>
        <begin position="189"/>
        <end position="405"/>
    </location>
</feature>
<feature type="modified residue" description="Phosphohistidine; by autocatalysis" evidence="2">
    <location>
        <position position="190"/>
    </location>
</feature>
<organism>
    <name type="scientific">Bacillus subtilis (strain 168)</name>
    <dbReference type="NCBI Taxonomy" id="224308"/>
    <lineage>
        <taxon>Bacteria</taxon>
        <taxon>Bacillati</taxon>
        <taxon>Bacillota</taxon>
        <taxon>Bacilli</taxon>
        <taxon>Bacillales</taxon>
        <taxon>Bacillaceae</taxon>
        <taxon>Bacillus</taxon>
    </lineage>
</organism>
<gene>
    <name evidence="8" type="primary">glnK</name>
    <name type="synonym">nrgB</name>
    <name type="synonym">ycbA</name>
    <name type="synonym">yzgA</name>
    <name type="ordered locus">BSU02440</name>
</gene>
<keyword id="KW-0067">ATP-binding</keyword>
<keyword id="KW-1003">Cell membrane</keyword>
<keyword id="KW-0418">Kinase</keyword>
<keyword id="KW-0472">Membrane</keyword>
<keyword id="KW-0547">Nucleotide-binding</keyword>
<keyword id="KW-0597">Phosphoprotein</keyword>
<keyword id="KW-1185">Reference proteome</keyword>
<keyword id="KW-0808">Transferase</keyword>
<keyword id="KW-0812">Transmembrane</keyword>
<keyword id="KW-1133">Transmembrane helix</keyword>
<keyword id="KW-0902">Two-component regulatory system</keyword>
<reference key="1">
    <citation type="journal article" date="1997" name="Nature">
        <title>The complete genome sequence of the Gram-positive bacterium Bacillus subtilis.</title>
        <authorList>
            <person name="Kunst F."/>
            <person name="Ogasawara N."/>
            <person name="Moszer I."/>
            <person name="Albertini A.M."/>
            <person name="Alloni G."/>
            <person name="Azevedo V."/>
            <person name="Bertero M.G."/>
            <person name="Bessieres P."/>
            <person name="Bolotin A."/>
            <person name="Borchert S."/>
            <person name="Borriss R."/>
            <person name="Boursier L."/>
            <person name="Brans A."/>
            <person name="Braun M."/>
            <person name="Brignell S.C."/>
            <person name="Bron S."/>
            <person name="Brouillet S."/>
            <person name="Bruschi C.V."/>
            <person name="Caldwell B."/>
            <person name="Capuano V."/>
            <person name="Carter N.M."/>
            <person name="Choi S.-K."/>
            <person name="Codani J.-J."/>
            <person name="Connerton I.F."/>
            <person name="Cummings N.J."/>
            <person name="Daniel R.A."/>
            <person name="Denizot F."/>
            <person name="Devine K.M."/>
            <person name="Duesterhoeft A."/>
            <person name="Ehrlich S.D."/>
            <person name="Emmerson P.T."/>
            <person name="Entian K.-D."/>
            <person name="Errington J."/>
            <person name="Fabret C."/>
            <person name="Ferrari E."/>
            <person name="Foulger D."/>
            <person name="Fritz C."/>
            <person name="Fujita M."/>
            <person name="Fujita Y."/>
            <person name="Fuma S."/>
            <person name="Galizzi A."/>
            <person name="Galleron N."/>
            <person name="Ghim S.-Y."/>
            <person name="Glaser P."/>
            <person name="Goffeau A."/>
            <person name="Golightly E.J."/>
            <person name="Grandi G."/>
            <person name="Guiseppi G."/>
            <person name="Guy B.J."/>
            <person name="Haga K."/>
            <person name="Haiech J."/>
            <person name="Harwood C.R."/>
            <person name="Henaut A."/>
            <person name="Hilbert H."/>
            <person name="Holsappel S."/>
            <person name="Hosono S."/>
            <person name="Hullo M.-F."/>
            <person name="Itaya M."/>
            <person name="Jones L.-M."/>
            <person name="Joris B."/>
            <person name="Karamata D."/>
            <person name="Kasahara Y."/>
            <person name="Klaerr-Blanchard M."/>
            <person name="Klein C."/>
            <person name="Kobayashi Y."/>
            <person name="Koetter P."/>
            <person name="Koningstein G."/>
            <person name="Krogh S."/>
            <person name="Kumano M."/>
            <person name="Kurita K."/>
            <person name="Lapidus A."/>
            <person name="Lardinois S."/>
            <person name="Lauber J."/>
            <person name="Lazarevic V."/>
            <person name="Lee S.-M."/>
            <person name="Levine A."/>
            <person name="Liu H."/>
            <person name="Masuda S."/>
            <person name="Mauel C."/>
            <person name="Medigue C."/>
            <person name="Medina N."/>
            <person name="Mellado R.P."/>
            <person name="Mizuno M."/>
            <person name="Moestl D."/>
            <person name="Nakai S."/>
            <person name="Noback M."/>
            <person name="Noone D."/>
            <person name="O'Reilly M."/>
            <person name="Ogawa K."/>
            <person name="Ogiwara A."/>
            <person name="Oudega B."/>
            <person name="Park S.-H."/>
            <person name="Parro V."/>
            <person name="Pohl T.M."/>
            <person name="Portetelle D."/>
            <person name="Porwollik S."/>
            <person name="Prescott A.M."/>
            <person name="Presecan E."/>
            <person name="Pujic P."/>
            <person name="Purnelle B."/>
            <person name="Rapoport G."/>
            <person name="Rey M."/>
            <person name="Reynolds S."/>
            <person name="Rieger M."/>
            <person name="Rivolta C."/>
            <person name="Rocha E."/>
            <person name="Roche B."/>
            <person name="Rose M."/>
            <person name="Sadaie Y."/>
            <person name="Sato T."/>
            <person name="Scanlan E."/>
            <person name="Schleich S."/>
            <person name="Schroeter R."/>
            <person name="Scoffone F."/>
            <person name="Sekiguchi J."/>
            <person name="Sekowska A."/>
            <person name="Seror S.J."/>
            <person name="Serror P."/>
            <person name="Shin B.-S."/>
            <person name="Soldo B."/>
            <person name="Sorokin A."/>
            <person name="Tacconi E."/>
            <person name="Takagi T."/>
            <person name="Takahashi H."/>
            <person name="Takemaru K."/>
            <person name="Takeuchi M."/>
            <person name="Tamakoshi A."/>
            <person name="Tanaka T."/>
            <person name="Terpstra P."/>
            <person name="Tognoni A."/>
            <person name="Tosato V."/>
            <person name="Uchiyama S."/>
            <person name="Vandenbol M."/>
            <person name="Vannier F."/>
            <person name="Vassarotti A."/>
            <person name="Viari A."/>
            <person name="Wambutt R."/>
            <person name="Wedler E."/>
            <person name="Wedler H."/>
            <person name="Weitzenegger T."/>
            <person name="Winters P."/>
            <person name="Wipat A."/>
            <person name="Yamamoto H."/>
            <person name="Yamane K."/>
            <person name="Yasumoto K."/>
            <person name="Yata K."/>
            <person name="Yoshida K."/>
            <person name="Yoshikawa H.-F."/>
            <person name="Zumstein E."/>
            <person name="Yoshikawa H."/>
            <person name="Danchin A."/>
        </authorList>
    </citation>
    <scope>NUCLEOTIDE SEQUENCE [LARGE SCALE GENOMIC DNA]</scope>
    <source>
        <strain>168</strain>
    </source>
</reference>
<reference key="2">
    <citation type="journal article" date="2009" name="Microbiology">
        <title>From a consortium sequence to a unified sequence: the Bacillus subtilis 168 reference genome a decade later.</title>
        <authorList>
            <person name="Barbe V."/>
            <person name="Cruveiller S."/>
            <person name="Kunst F."/>
            <person name="Lenoble P."/>
            <person name="Meurice G."/>
            <person name="Sekowska A."/>
            <person name="Vallenet D."/>
            <person name="Wang T."/>
            <person name="Moszer I."/>
            <person name="Medigue C."/>
            <person name="Danchin A."/>
        </authorList>
    </citation>
    <scope>SEQUENCE REVISION TO N-TERMINUS</scope>
</reference>
<reference key="3">
    <citation type="submission" date="1997-07" db="EMBL/GenBank/DDBJ databases">
        <title>Sequence analysis of the 70kb region between 17 and 23 degree of the Bacillus subtilis chromosome.</title>
        <authorList>
            <person name="Haga K."/>
            <person name="Liu H."/>
            <person name="Yasumoto K."/>
            <person name="Takahashi H."/>
            <person name="Yoshikawa H."/>
        </authorList>
    </citation>
    <scope>NUCLEOTIDE SEQUENCE [GENOMIC DNA] OF 1-394</scope>
    <source>
        <strain>168</strain>
    </source>
</reference>
<reference key="4">
    <citation type="journal article" date="1994" name="Biochim. Biophys. Acta">
        <title>Isolation of Tn917 insertional mutants of Bacillus subtilis that are resistant to the protonophore carbonyl cyanide m-chlorophenylhydrazone.</title>
        <authorList>
            <person name="Quirk P.G."/>
            <person name="Guffanti A.A."/>
            <person name="Clejan S."/>
            <person name="Cheng J."/>
            <person name="Krulwich T.A."/>
        </authorList>
    </citation>
    <scope>NUCLEOTIDE SEQUENCE [GENOMIC DNA] OF 333-410</scope>
    <source>
        <strain>BD99</strain>
    </source>
</reference>
<reference key="5">
    <citation type="journal article" date="2001" name="J. Bacteriol.">
        <title>Comprehensive DNA microarray analysis of Bacillus subtilis two-component regulatory systems.</title>
        <authorList>
            <person name="Kobayashi K."/>
            <person name="Ogura M."/>
            <person name="Yamaguchi H."/>
            <person name="Yoshida K."/>
            <person name="Ogasawara N."/>
            <person name="Tanaka T."/>
            <person name="Fujita Y."/>
        </authorList>
    </citation>
    <scope>FUNCTION</scope>
</reference>
<reference key="6">
    <citation type="journal article" date="2005" name="J. Bacteriol.">
        <title>Enhancement of glutamine utilization in Bacillus subtilis through the GlnK-GlnL two-component regulatory system.</title>
        <authorList>
            <person name="Satomura T."/>
            <person name="Shimura D."/>
            <person name="Asai K."/>
            <person name="Sadaie Y."/>
            <person name="Hirooka K."/>
            <person name="Fujita Y."/>
        </authorList>
    </citation>
    <scope>FUNCTION</scope>
    <scope>CATALYTIC ACTIVITY</scope>
    <scope>SUBCELLULAR LOCATION</scope>
    <source>
        <strain>168</strain>
    </source>
</reference>
<reference key="7">
    <citation type="journal article" date="2006" name="J. Biol. Chem.">
        <title>Interaction of the membrane-bound GlnK-AmtB complex with the master regulator of nitrogen metabolism TnrA in Bacillus subtilis.</title>
        <authorList>
            <person name="Heinrich A."/>
            <person name="Woyda K."/>
            <person name="Brauburger K."/>
            <person name="Meiss G."/>
            <person name="Detsch C."/>
            <person name="Stuelke J."/>
            <person name="Forchhammer K."/>
        </authorList>
    </citation>
    <scope>FUNCTION</scope>
    <scope>INTERACTION WITH TNRA</scope>
    <scope>DISRUPTION PHENOTYPE</scope>
    <scope>SUBCELLULAR LOCATION</scope>
    <scope>SUBUNIT</scope>
</reference>
<reference key="8">
    <citation type="journal article" date="2011" name="FEBS J.">
        <title>Interaction of the general transcription factor TnrA with the PII-like protein GlnK and glutamine synthetase in Bacillus subtilis.</title>
        <authorList>
            <person name="Kayumov A."/>
            <person name="Heinrich A."/>
            <person name="Fedorova K."/>
            <person name="Ilinskaya O."/>
            <person name="Forchhammer K."/>
        </authorList>
    </citation>
    <scope>FUNCTION</scope>
    <scope>INTERACTION WITH TNRA</scope>
    <scope>DISRUPTION PHENOTYPE</scope>
    <scope>SUBUNIT</scope>
</reference>
<reference key="9">
    <citation type="journal article" date="2015" name="Genes Dev.">
        <title>Structures of regulatory machinery reveal novel molecular mechanisms controlling B. subtilis nitrogen homeostasis.</title>
        <authorList>
            <person name="Schumacher M.A."/>
            <person name="Chinnam N.B."/>
            <person name="Cuthbert B."/>
            <person name="Tonthat N.K."/>
            <person name="Whitfill T."/>
        </authorList>
    </citation>
    <scope>INTERACTION WITH TNRA AND AMTB</scope>
    <scope>SUBUNIT</scope>
</reference>
<dbReference type="EC" id="2.7.13.3" evidence="10"/>
<dbReference type="EMBL" id="AL009126">
    <property type="protein sequence ID" value="CAB12038.2"/>
    <property type="molecule type" value="Genomic_DNA"/>
</dbReference>
<dbReference type="EMBL" id="AB006424">
    <property type="protein sequence ID" value="BAA33142.1"/>
    <property type="status" value="ALT_FRAME"/>
    <property type="molecule type" value="Genomic_DNA"/>
</dbReference>
<dbReference type="EMBL" id="L22503">
    <property type="protein sequence ID" value="AAA64346.1"/>
    <property type="molecule type" value="Genomic_DNA"/>
</dbReference>
<dbReference type="PIR" id="D69752">
    <property type="entry name" value="D69752"/>
</dbReference>
<dbReference type="RefSeq" id="WP_010886394.1">
    <property type="nucleotide sequence ID" value="NZ_OZ025638.1"/>
</dbReference>
<dbReference type="SMR" id="P40758"/>
<dbReference type="FunCoup" id="P40758">
    <property type="interactions" value="230"/>
</dbReference>
<dbReference type="IntAct" id="P40758">
    <property type="interactions" value="2"/>
</dbReference>
<dbReference type="MINT" id="P40758"/>
<dbReference type="STRING" id="224308.BSU02440"/>
<dbReference type="PaxDb" id="224308-BSU02440"/>
<dbReference type="EnsemblBacteria" id="CAB12038">
    <property type="protein sequence ID" value="CAB12038"/>
    <property type="gene ID" value="BSU_02440"/>
</dbReference>
<dbReference type="GeneID" id="938417"/>
<dbReference type="KEGG" id="bsu:BSU02440"/>
<dbReference type="PATRIC" id="fig|224308.43.peg.248"/>
<dbReference type="eggNOG" id="COG4191">
    <property type="taxonomic scope" value="Bacteria"/>
</dbReference>
<dbReference type="InParanoid" id="P40758"/>
<dbReference type="OrthoDB" id="1674512at2"/>
<dbReference type="BioCyc" id="BSUB:BSU02440-MONOMER"/>
<dbReference type="Proteomes" id="UP000001570">
    <property type="component" value="Chromosome"/>
</dbReference>
<dbReference type="GO" id="GO:0005886">
    <property type="term" value="C:plasma membrane"/>
    <property type="evidence" value="ECO:0007669"/>
    <property type="project" value="UniProtKB-SubCell"/>
</dbReference>
<dbReference type="GO" id="GO:0005524">
    <property type="term" value="F:ATP binding"/>
    <property type="evidence" value="ECO:0007669"/>
    <property type="project" value="UniProtKB-KW"/>
</dbReference>
<dbReference type="GO" id="GO:0004673">
    <property type="term" value="F:protein histidine kinase activity"/>
    <property type="evidence" value="ECO:0007669"/>
    <property type="project" value="UniProtKB-EC"/>
</dbReference>
<dbReference type="GO" id="GO:0000160">
    <property type="term" value="P:phosphorelay signal transduction system"/>
    <property type="evidence" value="ECO:0007669"/>
    <property type="project" value="UniProtKB-KW"/>
</dbReference>
<dbReference type="Gene3D" id="3.30.565.10">
    <property type="entry name" value="Histidine kinase-like ATPase, C-terminal domain"/>
    <property type="match status" value="1"/>
</dbReference>
<dbReference type="InterPro" id="IPR050980">
    <property type="entry name" value="2C_sensor_his_kinase"/>
</dbReference>
<dbReference type="InterPro" id="IPR036890">
    <property type="entry name" value="HATPase_C_sf"/>
</dbReference>
<dbReference type="InterPro" id="IPR005467">
    <property type="entry name" value="His_kinase_dom"/>
</dbReference>
<dbReference type="InterPro" id="IPR004358">
    <property type="entry name" value="Sig_transdc_His_kin-like_C"/>
</dbReference>
<dbReference type="PANTHER" id="PTHR44936">
    <property type="entry name" value="SENSOR PROTEIN CREC"/>
    <property type="match status" value="1"/>
</dbReference>
<dbReference type="PANTHER" id="PTHR44936:SF9">
    <property type="entry name" value="SENSOR PROTEIN CREC"/>
    <property type="match status" value="1"/>
</dbReference>
<dbReference type="Pfam" id="PF02518">
    <property type="entry name" value="HATPase_c"/>
    <property type="match status" value="1"/>
</dbReference>
<dbReference type="PRINTS" id="PR00344">
    <property type="entry name" value="BCTRLSENSOR"/>
</dbReference>
<dbReference type="SMART" id="SM00387">
    <property type="entry name" value="HATPase_c"/>
    <property type="match status" value="1"/>
</dbReference>
<dbReference type="SUPFAM" id="SSF55874">
    <property type="entry name" value="ATPase domain of HSP90 chaperone/DNA topoisomerase II/histidine kinase"/>
    <property type="match status" value="1"/>
</dbReference>
<dbReference type="PROSITE" id="PS50109">
    <property type="entry name" value="HIS_KIN"/>
    <property type="match status" value="1"/>
</dbReference>
<sequence length="410" mass="46801">MLITVPLAGELKFYPLNEEFRVSFGAPVFFFFLSLLRHVPAVLPGFLTGAAVFIFRVFLELWGGGHNGLTPILYDQASGFFFYMTYACLFSILKANRFRERPIMLGFIGFMIEVVSDCVELTVQFLIFHTVVTPEKITDIAVIAISHTFIVMSFYSVLKLYETQSREKQTRQQHEHMLMIVSNLYEETVHLKKTLKTTEKVTNDSYQLYREMKGKDVQLSGRILRLAGEIHEVKKDNQRIFAGLSKLISNESLRDYMRASDLLQLVIRMNEKYAEALGKQIDFYCSIEGEHDEYHVFIVLSIINNLTANAVEAMDEEGMVSLRLRKPNESMVEFQVEDNGPGISEKIGDIVFDPGFTSKYDEFGTPSTGIGLSYVKEIVTELEGDITFDNQQRGVVFAIRLPVRHLIQKG</sequence>
<name>GLNK_BACSU</name>
<proteinExistence type="evidence at protein level"/>
<accession>P40758</accession>
<accession>O87101</accession>